<gene>
    <name evidence="1" type="primary">rpmC</name>
    <name type="ordered locus">NGR_c11990</name>
</gene>
<feature type="chain" id="PRO_1000194027" description="Large ribosomal subunit protein uL29">
    <location>
        <begin position="1"/>
        <end position="66"/>
    </location>
</feature>
<protein>
    <recommendedName>
        <fullName evidence="1">Large ribosomal subunit protein uL29</fullName>
    </recommendedName>
    <alternativeName>
        <fullName evidence="2">50S ribosomal protein L29</fullName>
    </alternativeName>
</protein>
<dbReference type="EMBL" id="CP001389">
    <property type="protein sequence ID" value="ACP24981.1"/>
    <property type="molecule type" value="Genomic_DNA"/>
</dbReference>
<dbReference type="RefSeq" id="WP_011975176.1">
    <property type="nucleotide sequence ID" value="NC_012587.1"/>
</dbReference>
<dbReference type="RefSeq" id="YP_002825734.1">
    <property type="nucleotide sequence ID" value="NC_012587.1"/>
</dbReference>
<dbReference type="SMR" id="C3MAY8"/>
<dbReference type="STRING" id="394.NGR_c11990"/>
<dbReference type="GeneID" id="61614922"/>
<dbReference type="KEGG" id="rhi:NGR_c11990"/>
<dbReference type="PATRIC" id="fig|394.7.peg.4015"/>
<dbReference type="eggNOG" id="COG0255">
    <property type="taxonomic scope" value="Bacteria"/>
</dbReference>
<dbReference type="HOGENOM" id="CLU_158491_1_0_5"/>
<dbReference type="OrthoDB" id="9815192at2"/>
<dbReference type="Proteomes" id="UP000001054">
    <property type="component" value="Chromosome"/>
</dbReference>
<dbReference type="GO" id="GO:0022625">
    <property type="term" value="C:cytosolic large ribosomal subunit"/>
    <property type="evidence" value="ECO:0007669"/>
    <property type="project" value="TreeGrafter"/>
</dbReference>
<dbReference type="GO" id="GO:0003735">
    <property type="term" value="F:structural constituent of ribosome"/>
    <property type="evidence" value="ECO:0007669"/>
    <property type="project" value="InterPro"/>
</dbReference>
<dbReference type="GO" id="GO:0006412">
    <property type="term" value="P:translation"/>
    <property type="evidence" value="ECO:0007669"/>
    <property type="project" value="UniProtKB-UniRule"/>
</dbReference>
<dbReference type="CDD" id="cd00427">
    <property type="entry name" value="Ribosomal_L29_HIP"/>
    <property type="match status" value="1"/>
</dbReference>
<dbReference type="FunFam" id="1.10.287.310:FF:000001">
    <property type="entry name" value="50S ribosomal protein L29"/>
    <property type="match status" value="1"/>
</dbReference>
<dbReference type="Gene3D" id="1.10.287.310">
    <property type="match status" value="1"/>
</dbReference>
<dbReference type="HAMAP" id="MF_00374">
    <property type="entry name" value="Ribosomal_uL29"/>
    <property type="match status" value="1"/>
</dbReference>
<dbReference type="InterPro" id="IPR050063">
    <property type="entry name" value="Ribosomal_protein_uL29"/>
</dbReference>
<dbReference type="InterPro" id="IPR001854">
    <property type="entry name" value="Ribosomal_uL29"/>
</dbReference>
<dbReference type="InterPro" id="IPR018254">
    <property type="entry name" value="Ribosomal_uL29_CS"/>
</dbReference>
<dbReference type="InterPro" id="IPR036049">
    <property type="entry name" value="Ribosomal_uL29_sf"/>
</dbReference>
<dbReference type="NCBIfam" id="TIGR00012">
    <property type="entry name" value="L29"/>
    <property type="match status" value="1"/>
</dbReference>
<dbReference type="PANTHER" id="PTHR10916">
    <property type="entry name" value="60S RIBOSOMAL PROTEIN L35/50S RIBOSOMAL PROTEIN L29"/>
    <property type="match status" value="1"/>
</dbReference>
<dbReference type="PANTHER" id="PTHR10916:SF0">
    <property type="entry name" value="LARGE RIBOSOMAL SUBUNIT PROTEIN UL29C"/>
    <property type="match status" value="1"/>
</dbReference>
<dbReference type="Pfam" id="PF00831">
    <property type="entry name" value="Ribosomal_L29"/>
    <property type="match status" value="1"/>
</dbReference>
<dbReference type="SUPFAM" id="SSF46561">
    <property type="entry name" value="Ribosomal protein L29 (L29p)"/>
    <property type="match status" value="1"/>
</dbReference>
<dbReference type="PROSITE" id="PS00579">
    <property type="entry name" value="RIBOSOMAL_L29"/>
    <property type="match status" value="1"/>
</dbReference>
<comment type="similarity">
    <text evidence="1">Belongs to the universal ribosomal protein uL29 family.</text>
</comment>
<keyword id="KW-1185">Reference proteome</keyword>
<keyword id="KW-0687">Ribonucleoprotein</keyword>
<keyword id="KW-0689">Ribosomal protein</keyword>
<organism>
    <name type="scientific">Sinorhizobium fredii (strain NBRC 101917 / NGR234)</name>
    <dbReference type="NCBI Taxonomy" id="394"/>
    <lineage>
        <taxon>Bacteria</taxon>
        <taxon>Pseudomonadati</taxon>
        <taxon>Pseudomonadota</taxon>
        <taxon>Alphaproteobacteria</taxon>
        <taxon>Hyphomicrobiales</taxon>
        <taxon>Rhizobiaceae</taxon>
        <taxon>Sinorhizobium/Ensifer group</taxon>
        <taxon>Sinorhizobium</taxon>
    </lineage>
</organism>
<reference key="1">
    <citation type="journal article" date="2009" name="Appl. Environ. Microbiol.">
        <title>Rhizobium sp. strain NGR234 possesses a remarkable number of secretion systems.</title>
        <authorList>
            <person name="Schmeisser C."/>
            <person name="Liesegang H."/>
            <person name="Krysciak D."/>
            <person name="Bakkou N."/>
            <person name="Le Quere A."/>
            <person name="Wollherr A."/>
            <person name="Heinemeyer I."/>
            <person name="Morgenstern B."/>
            <person name="Pommerening-Roeser A."/>
            <person name="Flores M."/>
            <person name="Palacios R."/>
            <person name="Brenner S."/>
            <person name="Gottschalk G."/>
            <person name="Schmitz R.A."/>
            <person name="Broughton W.J."/>
            <person name="Perret X."/>
            <person name="Strittmatter A.W."/>
            <person name="Streit W.R."/>
        </authorList>
    </citation>
    <scope>NUCLEOTIDE SEQUENCE [LARGE SCALE GENOMIC DNA]</scope>
    <source>
        <strain>NBRC 101917 / NGR234</strain>
    </source>
</reference>
<evidence type="ECO:0000255" key="1">
    <source>
        <dbReference type="HAMAP-Rule" id="MF_00374"/>
    </source>
</evidence>
<evidence type="ECO:0000305" key="2"/>
<accession>C3MAY8</accession>
<name>RL29_SINFN</name>
<proteinExistence type="inferred from homology"/>
<sequence length="66" mass="7484">MKAADVRALSADQLKEELAKLKKEQFNLRFQKATGQLEKSSRIDEVRKDIARIKTIARQKAAEAKA</sequence>